<evidence type="ECO:0000269" key="1">
    <source>
    </source>
</evidence>
<evidence type="ECO:0000269" key="2">
    <source>
    </source>
</evidence>
<evidence type="ECO:0000269" key="3">
    <source>
    </source>
</evidence>
<evidence type="ECO:0000269" key="4">
    <source>
    </source>
</evidence>
<reference key="1">
    <citation type="submission" date="2012-11" db="EMBL/GenBank/DDBJ databases">
        <title>The phylogenetic status and pathogenicity of a new isolate of Metarhizium sp. from a fruit beetle larvae in Japan.</title>
        <authorList>
            <person name="Nishi O."/>
            <person name="Iiyama K."/>
            <person name="Yasunaga-Aoki C."/>
            <person name="Shimizu S."/>
        </authorList>
    </citation>
    <scope>NUCLEOTIDE SEQUENCE [GENOMIC RNA]</scope>
</reference>
<reference key="2">
    <citation type="journal article" date="2013" name="J. Virol.">
        <title>Middle East respiratory syndrome coronavirus accessory protein 4a is a type I interferon antagonist.</title>
        <authorList>
            <person name="Niemeyer D."/>
            <person name="Zillinger T."/>
            <person name="Muth D."/>
            <person name="Zielecki F."/>
            <person name="Horvath G."/>
            <person name="Suliman T."/>
            <person name="Barchet W."/>
            <person name="Weber F."/>
            <person name="Drosten C."/>
            <person name="Mueller M.A."/>
        </authorList>
    </citation>
    <scope>FUNCTION</scope>
</reference>
<reference key="3">
    <citation type="journal article" date="2013" name="Protein Cell">
        <title>The structural and accessory proteins M, ORF 4a, ORF 4b, and ORF 5 of Middle East respiratory syndrome coronavirus (MERS-CoV) are potent interferon antagonists.</title>
        <authorList>
            <person name="Yang Y."/>
            <person name="Zhang L."/>
            <person name="Geng H."/>
            <person name="Deng Y."/>
            <person name="Huang B."/>
            <person name="Guo Y."/>
            <person name="Zhao Z."/>
            <person name="Tan W."/>
        </authorList>
    </citation>
    <scope>FUNCTION</scope>
    <scope>SUBCELLULAR LOCATION</scope>
</reference>
<reference key="4">
    <citation type="journal article" date="2014" name="J. Virol.">
        <title>Middle east respiratory syndrome coronavirus 4a protein is a double-stranded RNA-binding protein that suppresses PACT-induced activation of RIG-I and MDA5 in the innate antiviral response.</title>
        <authorList>
            <person name="Siu K.L."/>
            <person name="Yeung M.L."/>
            <person name="Kok K.H."/>
            <person name="Yuen K.S."/>
            <person name="Kew C."/>
            <person name="Lui P.Y."/>
            <person name="Chan C.P."/>
            <person name="Tse H."/>
            <person name="Woo P.C."/>
            <person name="Yuen K.Y."/>
            <person name="Jin D.Y."/>
        </authorList>
    </citation>
    <scope>FUNCTION</scope>
    <scope>INTERACTION WITH HOST PRKRA/PACT</scope>
</reference>
<reference key="5">
    <citation type="journal article" date="2018" name="J. Virol.">
        <title>Inhibition of Stress Granule Formation by Middle East Respiratory Syndrome Coronavirus 4a Accessory Protein Facilitates Viral Translation, Leading to Efficient Virus Replication.</title>
        <authorList>
            <person name="Nakagawa K."/>
            <person name="Narayanan K."/>
            <person name="Wada M."/>
            <person name="Makino S."/>
        </authorList>
    </citation>
    <scope>FUNCTION</scope>
</reference>
<feature type="chain" id="PRO_0000422436" description="Non-structural protein ORF4a">
    <location>
        <begin position="1"/>
        <end position="109"/>
    </location>
</feature>
<proteinExistence type="evidence at protein level"/>
<organism>
    <name type="scientific">Middle East respiratory syndrome-related coronavirus (isolate United Kingdom/H123990006/2012)</name>
    <name type="common">MERS-CoV</name>
    <name type="synonym">Betacoronavirus England 1</name>
    <dbReference type="NCBI Taxonomy" id="1263720"/>
    <lineage>
        <taxon>Viruses</taxon>
        <taxon>Riboviria</taxon>
        <taxon>Orthornavirae</taxon>
        <taxon>Pisuviricota</taxon>
        <taxon>Pisoniviricetes</taxon>
        <taxon>Nidovirales</taxon>
        <taxon>Cornidovirineae</taxon>
        <taxon>Coronaviridae</taxon>
        <taxon>Orthocoronavirinae</taxon>
        <taxon>Betacoronavirus</taxon>
        <taxon>Merbecovirus</taxon>
        <taxon>Middle East respiratory syndrome-related coronavirus</taxon>
    </lineage>
</organism>
<gene>
    <name type="primary">ORF4a</name>
</gene>
<accession>K9N4V0</accession>
<organismHost>
    <name type="scientific">Camelus dromedarius</name>
    <name type="common">Dromedary</name>
    <name type="synonym">Arabian camel</name>
    <dbReference type="NCBI Taxonomy" id="9838"/>
</organismHost>
<organismHost>
    <name type="scientific">Homo sapiens</name>
    <name type="common">Human</name>
    <dbReference type="NCBI Taxonomy" id="9606"/>
</organismHost>
<comment type="function">
    <text evidence="1 2 3 4">DsRNA-binding protein that plays a role in the inhibition of host innate response (PubMed:24027320, PubMed:24318862). Suppresses host PACT-induced activation of RIGI and MDA5 and thereby circumvents the production of type I interferons (PubMed:24522921). Also prevents the activation of host NF-kappa-B. Inhibits the integrated stress response (ISR) in the infected cell by binding to dsRNA and inhibiting EIF2AK2-mediated phosphorylation of EIF2S1/eIF2-alpha (PubMed:30068649). Stress granule formation is thus inhibited, which allows protein synthesis and viral replication (PubMed:30068649).</text>
</comment>
<comment type="subunit">
    <text evidence="3">Interacts with host PRKRA/PACT.</text>
</comment>
<comment type="subcellular location">
    <subcellularLocation>
        <location evidence="2">Host cytoplasm</location>
    </subcellularLocation>
</comment>
<dbReference type="EMBL" id="KC164505">
    <property type="protein sequence ID" value="AFY13309.1"/>
    <property type="molecule type" value="Genomic_RNA"/>
</dbReference>
<dbReference type="RefSeq" id="YP_007188581.1">
    <property type="nucleotide sequence ID" value="NC_038294.1"/>
</dbReference>
<dbReference type="SMR" id="K9N4V0"/>
<dbReference type="BioGRID" id="4383882">
    <property type="interactions" value="48"/>
</dbReference>
<dbReference type="IntAct" id="K9N4V0">
    <property type="interactions" value="51"/>
</dbReference>
<dbReference type="GeneID" id="37616434"/>
<dbReference type="Proteomes" id="UP000139997">
    <property type="component" value="Genome"/>
</dbReference>
<dbReference type="GO" id="GO:0030430">
    <property type="term" value="C:host cell cytoplasm"/>
    <property type="evidence" value="ECO:0000314"/>
    <property type="project" value="UniProtKB"/>
</dbReference>
<dbReference type="GO" id="GO:0052150">
    <property type="term" value="P:symbiont-mediated perturbation of host apoptosis"/>
    <property type="evidence" value="ECO:0007669"/>
    <property type="project" value="UniProtKB-KW"/>
</dbReference>
<dbReference type="GO" id="GO:0039646">
    <property type="term" value="P:symbiont-mediated perturbation of host cell cycle G0/G1 transition checkpoint"/>
    <property type="evidence" value="ECO:0007669"/>
    <property type="project" value="UniProtKB-KW"/>
</dbReference>
<dbReference type="GO" id="GO:0044071">
    <property type="term" value="P:symbiont-mediated perturbation of host cell cycle progression"/>
    <property type="evidence" value="ECO:0007669"/>
    <property type="project" value="UniProtKB-KW"/>
</dbReference>
<dbReference type="GO" id="GO:0052170">
    <property type="term" value="P:symbiont-mediated suppression of host innate immune response"/>
    <property type="evidence" value="ECO:0007669"/>
    <property type="project" value="UniProtKB-KW"/>
</dbReference>
<dbReference type="GO" id="GO:0085034">
    <property type="term" value="P:symbiont-mediated suppression of host NF-kappaB cascade"/>
    <property type="evidence" value="ECO:0000314"/>
    <property type="project" value="UniProtKB"/>
</dbReference>
<dbReference type="GO" id="GO:0039580">
    <property type="term" value="P:symbiont-mediated suppression of host PKR/eIFalpha signaling"/>
    <property type="evidence" value="ECO:0000269"/>
    <property type="project" value="SigSci"/>
</dbReference>
<dbReference type="GO" id="GO:0039502">
    <property type="term" value="P:symbiont-mediated suppression of host type I interferon-mediated signaling pathway"/>
    <property type="evidence" value="ECO:0000314"/>
    <property type="project" value="UniProtKB"/>
</dbReference>
<dbReference type="CDD" id="cd00048">
    <property type="entry name" value="DSRM_SF"/>
    <property type="match status" value="1"/>
</dbReference>
<dbReference type="Gene3D" id="3.30.160.20">
    <property type="match status" value="1"/>
</dbReference>
<dbReference type="SUPFAM" id="SSF54768">
    <property type="entry name" value="dsRNA-binding domain-like"/>
    <property type="match status" value="1"/>
</dbReference>
<keyword id="KW-0053">Apoptosis</keyword>
<keyword id="KW-1077">G0/G1 host cell cycle checkpoint dysregulation by virus</keyword>
<keyword id="KW-1035">Host cytoplasm</keyword>
<keyword id="KW-0945">Host-virus interaction</keyword>
<keyword id="KW-1090">Inhibition of host innate immune response by virus</keyword>
<keyword id="KW-1100">Inhibition of host NF-kappa-B by virus</keyword>
<keyword id="KW-1119">Modulation of host cell apoptosis by virus</keyword>
<keyword id="KW-1121">Modulation of host cell cycle by virus</keyword>
<keyword id="KW-1185">Reference proteome</keyword>
<keyword id="KW-0899">Viral immunoevasion</keyword>
<sequence>MDYVSLLNQIWQKYLNSPYTTCLYIPKPTAKYTPLVGTSLHPVLWNCQLSFAGYTESAVNSTKALAKQDAAQRIAWLLHKDGGIPDGCSLYLRHSSLFAQSEEEESFSN</sequence>
<name>ORF4A_MERS1</name>
<protein>
    <recommendedName>
        <fullName>Non-structural protein ORF4a</fullName>
        <shortName>ORF4a</shortName>
    </recommendedName>
</protein>